<keyword id="KW-0256">Endoplasmic reticulum</keyword>
<keyword id="KW-0443">Lipid metabolism</keyword>
<keyword id="KW-0472">Membrane</keyword>
<keyword id="KW-0521">NADP</keyword>
<keyword id="KW-0547">Nucleotide-binding</keyword>
<keyword id="KW-0560">Oxidoreductase</keyword>
<keyword id="KW-1185">Reference proteome</keyword>
<keyword id="KW-0746">Sphingolipid metabolism</keyword>
<keyword id="KW-0812">Transmembrane</keyword>
<keyword id="KW-1133">Transmembrane helix</keyword>
<organism>
    <name type="scientific">Saccharomyces cerevisiae (strain ATCC 204508 / S288c)</name>
    <name type="common">Baker's yeast</name>
    <dbReference type="NCBI Taxonomy" id="559292"/>
    <lineage>
        <taxon>Eukaryota</taxon>
        <taxon>Fungi</taxon>
        <taxon>Dikarya</taxon>
        <taxon>Ascomycota</taxon>
        <taxon>Saccharomycotina</taxon>
        <taxon>Saccharomycetes</taxon>
        <taxon>Saccharomycetales</taxon>
        <taxon>Saccharomycetaceae</taxon>
        <taxon>Saccharomyces</taxon>
    </lineage>
</organism>
<reference key="1">
    <citation type="journal article" date="1993" name="Yeast">
        <title>The complete sequence of a 19,482 bp segment located on the right arm of chromosome II from Saccharomyces cerevisiae.</title>
        <authorList>
            <person name="Doignon F."/>
            <person name="Biteau N."/>
            <person name="Crouzet M."/>
            <person name="Aigle M."/>
        </authorList>
    </citation>
    <scope>NUCLEOTIDE SEQUENCE [GENOMIC DNA]</scope>
    <source>
        <strain>ATCC 204508 / S288c</strain>
    </source>
</reference>
<reference key="2">
    <citation type="journal article" date="1994" name="EMBO J.">
        <title>Complete DNA sequence of yeast chromosome II.</title>
        <authorList>
            <person name="Feldmann H."/>
            <person name="Aigle M."/>
            <person name="Aljinovic G."/>
            <person name="Andre B."/>
            <person name="Baclet M.C."/>
            <person name="Barthe C."/>
            <person name="Baur A."/>
            <person name="Becam A.-M."/>
            <person name="Biteau N."/>
            <person name="Boles E."/>
            <person name="Brandt T."/>
            <person name="Brendel M."/>
            <person name="Brueckner M."/>
            <person name="Bussereau F."/>
            <person name="Christiansen C."/>
            <person name="Contreras R."/>
            <person name="Crouzet M."/>
            <person name="Cziepluch C."/>
            <person name="Demolis N."/>
            <person name="Delaveau T."/>
            <person name="Doignon F."/>
            <person name="Domdey H."/>
            <person name="Duesterhus S."/>
            <person name="Dubois E."/>
            <person name="Dujon B."/>
            <person name="El Bakkoury M."/>
            <person name="Entian K.-D."/>
            <person name="Feuermann M."/>
            <person name="Fiers W."/>
            <person name="Fobo G.M."/>
            <person name="Fritz C."/>
            <person name="Gassenhuber J."/>
            <person name="Glansdorff N."/>
            <person name="Goffeau A."/>
            <person name="Grivell L.A."/>
            <person name="de Haan M."/>
            <person name="Hein C."/>
            <person name="Herbert C.J."/>
            <person name="Hollenberg C.P."/>
            <person name="Holmstroem K."/>
            <person name="Jacq C."/>
            <person name="Jacquet M."/>
            <person name="Jauniaux J.-C."/>
            <person name="Jonniaux J.-L."/>
            <person name="Kallesoee T."/>
            <person name="Kiesau P."/>
            <person name="Kirchrath L."/>
            <person name="Koetter P."/>
            <person name="Korol S."/>
            <person name="Liebl S."/>
            <person name="Logghe M."/>
            <person name="Lohan A.J.E."/>
            <person name="Louis E.J."/>
            <person name="Li Z.Y."/>
            <person name="Maat M.J."/>
            <person name="Mallet L."/>
            <person name="Mannhaupt G."/>
            <person name="Messenguy F."/>
            <person name="Miosga T."/>
            <person name="Molemans F."/>
            <person name="Mueller S."/>
            <person name="Nasr F."/>
            <person name="Obermaier B."/>
            <person name="Perea J."/>
            <person name="Pierard A."/>
            <person name="Piravandi E."/>
            <person name="Pohl F.M."/>
            <person name="Pohl T.M."/>
            <person name="Potier S."/>
            <person name="Proft M."/>
            <person name="Purnelle B."/>
            <person name="Ramezani Rad M."/>
            <person name="Rieger M."/>
            <person name="Rose M."/>
            <person name="Schaaff-Gerstenschlaeger I."/>
            <person name="Scherens B."/>
            <person name="Schwarzlose C."/>
            <person name="Skala J."/>
            <person name="Slonimski P.P."/>
            <person name="Smits P.H.M."/>
            <person name="Souciet J.-L."/>
            <person name="Steensma H.Y."/>
            <person name="Stucka R."/>
            <person name="Urrestarazu L.A."/>
            <person name="van der Aart Q.J.M."/>
            <person name="Van Dyck L."/>
            <person name="Vassarotti A."/>
            <person name="Vetter I."/>
            <person name="Vierendeels F."/>
            <person name="Vissers S."/>
            <person name="Wagner G."/>
            <person name="de Wergifosse P."/>
            <person name="Wolfe K.H."/>
            <person name="Zagulski M."/>
            <person name="Zimmermann F.K."/>
            <person name="Mewes H.-W."/>
            <person name="Kleine K."/>
        </authorList>
    </citation>
    <scope>NUCLEOTIDE SEQUENCE [LARGE SCALE GENOMIC DNA]</scope>
    <source>
        <strain>ATCC 204508 / S288c</strain>
    </source>
</reference>
<reference key="3">
    <citation type="journal article" date="2014" name="G3 (Bethesda)">
        <title>The reference genome sequence of Saccharomyces cerevisiae: Then and now.</title>
        <authorList>
            <person name="Engel S.R."/>
            <person name="Dietrich F.S."/>
            <person name="Fisk D.G."/>
            <person name="Binkley G."/>
            <person name="Balakrishnan R."/>
            <person name="Costanzo M.C."/>
            <person name="Dwight S.S."/>
            <person name="Hitz B.C."/>
            <person name="Karra K."/>
            <person name="Nash R.S."/>
            <person name="Weng S."/>
            <person name="Wong E.D."/>
            <person name="Lloyd P."/>
            <person name="Skrzypek M.S."/>
            <person name="Miyasato S.R."/>
            <person name="Simison M."/>
            <person name="Cherry J.M."/>
        </authorList>
    </citation>
    <scope>GENOME REANNOTATION</scope>
    <scope>SEQUENCE REVISION TO 255</scope>
    <source>
        <strain>ATCC 204508 / S288c</strain>
    </source>
</reference>
<reference key="4">
    <citation type="journal article" date="1998" name="J. Biol. Chem.">
        <title>The Saccharomyces cerevisiae TSC10/YBR265w gene encoding 3-ketosphinganine reductase is identified in a screen for temperature-sensitive suppressors of the Ca2+-sensitive csg2Delta mutant.</title>
        <authorList>
            <person name="Beeler T."/>
            <person name="Bacikova D."/>
            <person name="Gable K."/>
            <person name="Hopkins L."/>
            <person name="Johnson C."/>
            <person name="Slife H."/>
            <person name="Dunn T."/>
        </authorList>
    </citation>
    <scope>FUNCTION</scope>
    <scope>CATALYTIC ACTIVITY</scope>
</reference>
<reference key="5">
    <citation type="journal article" date="2003" name="Nature">
        <title>Global analysis of protein localization in budding yeast.</title>
        <authorList>
            <person name="Huh W.-K."/>
            <person name="Falvo J.V."/>
            <person name="Gerke L.C."/>
            <person name="Carroll A.S."/>
            <person name="Howson R.W."/>
            <person name="Weissman J.S."/>
            <person name="O'Shea E.K."/>
        </authorList>
    </citation>
    <scope>SUBCELLULAR LOCATION [LARGE SCALE ANALYSIS]</scope>
</reference>
<reference key="6">
    <citation type="journal article" date="2003" name="Nature">
        <title>Global analysis of protein expression in yeast.</title>
        <authorList>
            <person name="Ghaemmaghami S."/>
            <person name="Huh W.-K."/>
            <person name="Bower K."/>
            <person name="Howson R.W."/>
            <person name="Belle A."/>
            <person name="Dephoure N."/>
            <person name="O'Shea E.K."/>
            <person name="Weissman J.S."/>
        </authorList>
    </citation>
    <scope>LEVEL OF PROTEIN EXPRESSION [LARGE SCALE ANALYSIS]</scope>
</reference>
<reference key="7">
    <citation type="journal article" date="2006" name="Biochim. Biophys. Acta">
        <title>Sphingolipid biosynthesis in pathogenic fungi: identification and characterization of the 3-ketosphinganine reductase activity of Candida albicans and Aspergillus fumigatus.</title>
        <authorList>
            <person name="Fornarotto M."/>
            <person name="Xiao L."/>
            <person name="Hou Y."/>
            <person name="Koch K.A."/>
            <person name="Chang E."/>
            <person name="O'Malley R.M."/>
            <person name="Black T.A."/>
            <person name="Cable M.B."/>
            <person name="Walker S.S."/>
        </authorList>
    </citation>
    <scope>FUNCTION</scope>
    <scope>CATALYTIC ACTIVITY</scope>
</reference>
<reference key="8">
    <citation type="journal article" date="2009" name="J. Lipid Res.">
        <title>Tsc10p and FVT1: topologically distinct short-chain reductases required for long-chain base synthesis in yeast and mammals.</title>
        <authorList>
            <person name="Gupta S.D."/>
            <person name="Gable K."/>
            <person name="Han G."/>
            <person name="Borovitskaya A."/>
            <person name="Selby L."/>
            <person name="Dunn T.M."/>
            <person name="Harmon J.M."/>
        </authorList>
    </citation>
    <scope>FUNCTION</scope>
    <scope>SUBUNIT</scope>
    <scope>SUBCELLULAR LOCATION</scope>
    <scope>DISRUPTION PHENOTYPE</scope>
    <scope>TOPOLOGY</scope>
    <scope>MUTAGENESIS OF ASN-140; SER-167; TYR-180 AND LYS-184</scope>
</reference>
<reference key="9">
    <citation type="journal article" date="2022" name="J. Lipid Res.">
        <title>Identification and characterization of 3-ketosphinganine reductase activity encoded at the BT_0972 locus in Bacteroides thetaiotaomicron.</title>
        <authorList>
            <person name="Lee M.T."/>
            <person name="Le H."/>
            <person name="Besler K."/>
            <person name="Johnson E."/>
        </authorList>
    </citation>
    <scope>FUNCTION</scope>
    <scope>CATALYTIC ACTIVITY</scope>
</reference>
<feature type="chain" id="PRO_0000054800" description="3-ketodihydrosphingosine reductase TSC10">
    <location>
        <begin position="1"/>
        <end position="320"/>
    </location>
</feature>
<feature type="topological domain" description="Cytoplasmic" evidence="13">
    <location>
        <begin position="1"/>
        <end position="254"/>
    </location>
</feature>
<feature type="transmembrane region" description="Helical" evidence="5">
    <location>
        <begin position="255"/>
        <end position="275"/>
    </location>
</feature>
<feature type="topological domain" description="Lumenal" evidence="13">
    <location>
        <begin position="276"/>
        <end position="279"/>
    </location>
</feature>
<feature type="transmembrane region" description="Helical" evidence="5">
    <location>
        <begin position="280"/>
        <end position="300"/>
    </location>
</feature>
<feature type="topological domain" description="Cytoplasmic" evidence="13">
    <location>
        <begin position="301"/>
        <end position="320"/>
    </location>
</feature>
<feature type="short sequence motif" description="GXSXG" evidence="4">
    <location>
        <begin position="14"/>
        <end position="18"/>
    </location>
</feature>
<feature type="active site" description="Proton donor" evidence="2">
    <location>
        <position position="166"/>
    </location>
</feature>
<feature type="active site" description="Proton acceptor" evidence="2">
    <location>
        <position position="180"/>
    </location>
</feature>
<feature type="active site" description="Lowers pKa of active site Tyr" evidence="2">
    <location>
        <position position="184"/>
    </location>
</feature>
<feature type="binding site" evidence="1">
    <location>
        <position position="11"/>
    </location>
    <ligand>
        <name>NADP(+)</name>
        <dbReference type="ChEBI" id="CHEBI:58349"/>
    </ligand>
</feature>
<feature type="binding site" evidence="3">
    <location>
        <position position="14"/>
    </location>
    <ligand>
        <name>NADPH</name>
        <dbReference type="ChEBI" id="CHEBI:57783"/>
    </ligand>
</feature>
<feature type="binding site" evidence="3">
    <location>
        <position position="16"/>
    </location>
    <ligand>
        <name>NADPH</name>
        <dbReference type="ChEBI" id="CHEBI:57783"/>
    </ligand>
</feature>
<feature type="binding site" evidence="3">
    <location>
        <position position="18"/>
    </location>
    <ligand>
        <name>NADPH</name>
        <dbReference type="ChEBI" id="CHEBI:57783"/>
    </ligand>
</feature>
<feature type="binding site" evidence="1">
    <location>
        <position position="19"/>
    </location>
    <ligand>
        <name>NADP(+)</name>
        <dbReference type="ChEBI" id="CHEBI:58349"/>
    </ligand>
</feature>
<feature type="binding site" evidence="3">
    <location>
        <position position="41"/>
    </location>
    <ligand>
        <name>NADPH</name>
        <dbReference type="ChEBI" id="CHEBI:57783"/>
    </ligand>
</feature>
<feature type="binding site" evidence="3">
    <location>
        <position position="45"/>
    </location>
    <ligand>
        <name>NADPH</name>
        <dbReference type="ChEBI" id="CHEBI:57783"/>
    </ligand>
</feature>
<feature type="binding site" evidence="1">
    <location>
        <position position="89"/>
    </location>
    <ligand>
        <name>NADP(+)</name>
        <dbReference type="ChEBI" id="CHEBI:58349"/>
    </ligand>
</feature>
<feature type="binding site" evidence="3">
    <location>
        <position position="89"/>
    </location>
    <ligand>
        <name>NADPH</name>
        <dbReference type="ChEBI" id="CHEBI:57783"/>
    </ligand>
</feature>
<feature type="binding site" evidence="3">
    <location>
        <position position="90"/>
    </location>
    <ligand>
        <name>NADPH</name>
        <dbReference type="ChEBI" id="CHEBI:57783"/>
    </ligand>
</feature>
<feature type="binding site" evidence="2">
    <location>
        <position position="180"/>
    </location>
    <ligand>
        <name>NADP(+)</name>
        <dbReference type="ChEBI" id="CHEBI:58349"/>
    </ligand>
</feature>
<feature type="binding site" evidence="2">
    <location>
        <position position="184"/>
    </location>
    <ligand>
        <name>NADP(+)</name>
        <dbReference type="ChEBI" id="CHEBI:58349"/>
    </ligand>
</feature>
<feature type="binding site" evidence="1">
    <location>
        <position position="213"/>
    </location>
    <ligand>
        <name>NADP(+)</name>
        <dbReference type="ChEBI" id="CHEBI:58349"/>
    </ligand>
</feature>
<feature type="mutagenesis site" description="Inviable." evidence="8">
    <original>N</original>
    <variation>L</variation>
    <location>
        <position position="140"/>
    </location>
</feature>
<feature type="mutagenesis site" description="Inviable." evidence="8">
    <original>S</original>
    <variation>A</variation>
    <location>
        <position position="167"/>
    </location>
</feature>
<feature type="mutagenesis site" description="Viable." evidence="8">
    <original>Y</original>
    <variation>F</variation>
    <variation>Q</variation>
    <location>
        <position position="180"/>
    </location>
</feature>
<feature type="mutagenesis site" description="Inviable." evidence="8">
    <original>K</original>
    <variation>R</variation>
    <variation>I</variation>
    <location>
        <position position="184"/>
    </location>
</feature>
<feature type="sequence conflict" description="In Ref. 1; CAA49930 and 2; CAA85228." evidence="12" ref="1 2">
    <original>D</original>
    <variation>E</variation>
    <location>
        <position position="255"/>
    </location>
</feature>
<gene>
    <name evidence="11" type="primary">TSC10</name>
    <name type="ordered locus">YBR265W</name>
    <name type="ORF">YBR1734</name>
</gene>
<comment type="function">
    <text evidence="7 8 9 10">Catalyzes the reduction of 3'-oxosphinganine (3-ketodihydrosphingosine/KDS) to sphinganine (dihydrosphingosine/DHS), the second step of de novo sphingolipid biosynthesis.</text>
</comment>
<comment type="catalytic activity">
    <reaction evidence="7 10 14">
        <text>sphinganine + NADP(+) = 3-oxosphinganine + NADPH + H(+)</text>
        <dbReference type="Rhea" id="RHEA:22640"/>
        <dbReference type="ChEBI" id="CHEBI:15378"/>
        <dbReference type="ChEBI" id="CHEBI:57783"/>
        <dbReference type="ChEBI" id="CHEBI:57817"/>
        <dbReference type="ChEBI" id="CHEBI:58299"/>
        <dbReference type="ChEBI" id="CHEBI:58349"/>
        <dbReference type="EC" id="1.1.1.102"/>
    </reaction>
    <physiologicalReaction direction="right-to-left" evidence="7 14">
        <dbReference type="Rhea" id="RHEA:22642"/>
    </physiologicalReaction>
</comment>
<comment type="pathway">
    <text evidence="10">Lipid metabolism; sphingolipid metabolism.</text>
</comment>
<comment type="subunit">
    <text evidence="8">Dimer or tetramer.</text>
</comment>
<comment type="subcellular location">
    <subcellularLocation>
        <location evidence="8">Endoplasmic reticulum membrane</location>
        <topology evidence="8">Multi-pass membrane protein</topology>
    </subcellularLocation>
</comment>
<comment type="disruption phenotype">
    <text evidence="8">Inviability of the knockout mutant is rescued by addition of phytosphingosine (PHS) to the growth medium.</text>
</comment>
<comment type="miscellaneous">
    <text evidence="6">Present with 7700 molecules/cell in log phase SD medium.</text>
</comment>
<comment type="similarity">
    <text evidence="12">Belongs to the short-chain dehydrogenases/reductases (SDR) family.</text>
</comment>
<protein>
    <recommendedName>
        <fullName evidence="11">3-ketodihydrosphingosine reductase TSC10</fullName>
        <ecNumber evidence="7 10 14">1.1.1.102</ecNumber>
    </recommendedName>
    <alternativeName>
        <fullName evidence="11">3-dehydrosphinganine reductase</fullName>
    </alternativeName>
    <alternativeName>
        <fullName evidence="11">KDS reductase</fullName>
    </alternativeName>
    <alternativeName>
        <fullName evidence="11">Temperature-sensitive CSG2 suppressor protein 10</fullName>
    </alternativeName>
</protein>
<sequence length="320" mass="35973">MKFTLEDQVVLITGGSQGLGKEFAKKYYNEAENTKIIIVSRSEARLLDTCNEIRIEAHLRRETTDEGQVQHKLAAPLDLEQRLFYYPCDLSCYESVECLFNALRDLDLLPTQTLCCAGGAVPKLFRGLSGHELNLGMDINYKTTLNVAHQIALAEQTKEHHLIIFSSATALYPFVGYSQYAPAKAAIKSLVAILRQELTNFRISCVYPGNFESEGFTVEQLTKPEITKLIEGPSDAIPCKQACDIIAKSLARGDDDVFTDFVGWMIMGMDLGLTAKKSRFVPLQWIFGVLSNILVVPFYMVGCSWYIRKWFRENDGKKAN</sequence>
<name>KDSR_YEAST</name>
<evidence type="ECO:0000250" key="1">
    <source>
        <dbReference type="UniProtKB" id="L0E2Z4"/>
    </source>
</evidence>
<evidence type="ECO:0000250" key="2">
    <source>
        <dbReference type="UniProtKB" id="O93868"/>
    </source>
</evidence>
<evidence type="ECO:0000250" key="3">
    <source>
        <dbReference type="UniProtKB" id="P0CR36"/>
    </source>
</evidence>
<evidence type="ECO:0000250" key="4">
    <source>
        <dbReference type="UniProtKB" id="P40471"/>
    </source>
</evidence>
<evidence type="ECO:0000255" key="5"/>
<evidence type="ECO:0000269" key="6">
    <source>
    </source>
</evidence>
<evidence type="ECO:0000269" key="7">
    <source>
    </source>
</evidence>
<evidence type="ECO:0000269" key="8">
    <source>
    </source>
</evidence>
<evidence type="ECO:0000269" key="9">
    <source>
    </source>
</evidence>
<evidence type="ECO:0000269" key="10">
    <source>
    </source>
</evidence>
<evidence type="ECO:0000303" key="11">
    <source>
    </source>
</evidence>
<evidence type="ECO:0000305" key="12"/>
<evidence type="ECO:0000305" key="13">
    <source>
    </source>
</evidence>
<evidence type="ECO:0000305" key="14">
    <source>
    </source>
</evidence>
<dbReference type="EC" id="1.1.1.102" evidence="7 10 14"/>
<dbReference type="EMBL" id="X70529">
    <property type="protein sequence ID" value="CAA49930.1"/>
    <property type="molecule type" value="Genomic_DNA"/>
</dbReference>
<dbReference type="EMBL" id="Z36134">
    <property type="protein sequence ID" value="CAA85228.1"/>
    <property type="molecule type" value="Genomic_DNA"/>
</dbReference>
<dbReference type="EMBL" id="BK006936">
    <property type="protein sequence ID" value="DAA07382.2"/>
    <property type="molecule type" value="Genomic_DNA"/>
</dbReference>
<dbReference type="PIR" id="S32966">
    <property type="entry name" value="S32966"/>
</dbReference>
<dbReference type="RefSeq" id="NP_009824.2">
    <property type="nucleotide sequence ID" value="NM_001178613.2"/>
</dbReference>
<dbReference type="SMR" id="P38342"/>
<dbReference type="BioGRID" id="32961">
    <property type="interactions" value="142"/>
</dbReference>
<dbReference type="DIP" id="DIP-4781N"/>
<dbReference type="FunCoup" id="P38342">
    <property type="interactions" value="186"/>
</dbReference>
<dbReference type="IntAct" id="P38342">
    <property type="interactions" value="5"/>
</dbReference>
<dbReference type="MINT" id="P38342"/>
<dbReference type="STRING" id="4932.YBR265W"/>
<dbReference type="SwissLipids" id="SLP:000001843"/>
<dbReference type="iPTMnet" id="P38342"/>
<dbReference type="PaxDb" id="4932-YBR265W"/>
<dbReference type="PeptideAtlas" id="P38342"/>
<dbReference type="EnsemblFungi" id="YBR265W_mRNA">
    <property type="protein sequence ID" value="YBR265W"/>
    <property type="gene ID" value="YBR265W"/>
</dbReference>
<dbReference type="GeneID" id="852568"/>
<dbReference type="KEGG" id="sce:YBR265W"/>
<dbReference type="AGR" id="SGD:S000000469"/>
<dbReference type="SGD" id="S000000469">
    <property type="gene designation" value="TSC10"/>
</dbReference>
<dbReference type="VEuPathDB" id="FungiDB:YBR265W"/>
<dbReference type="eggNOG" id="KOG1210">
    <property type="taxonomic scope" value="Eukaryota"/>
</dbReference>
<dbReference type="GeneTree" id="ENSGT00940000156961"/>
<dbReference type="HOGENOM" id="CLU_010194_3_0_1"/>
<dbReference type="InParanoid" id="P38342"/>
<dbReference type="OMA" id="PRQWGFF"/>
<dbReference type="OrthoDB" id="10267115at2759"/>
<dbReference type="BioCyc" id="MetaCyc:YBR265W-MONOMER"/>
<dbReference type="BioCyc" id="YEAST:YBR265W-MONOMER"/>
<dbReference type="Reactome" id="R-SCE-1660661">
    <property type="pathway name" value="Sphingolipid de novo biosynthesis"/>
</dbReference>
<dbReference type="UniPathway" id="UPA00222"/>
<dbReference type="BioGRID-ORCS" id="852568">
    <property type="hits" value="10 hits in 10 CRISPR screens"/>
</dbReference>
<dbReference type="PRO" id="PR:P38342"/>
<dbReference type="Proteomes" id="UP000002311">
    <property type="component" value="Chromosome II"/>
</dbReference>
<dbReference type="RNAct" id="P38342">
    <property type="molecule type" value="protein"/>
</dbReference>
<dbReference type="GO" id="GO:0005737">
    <property type="term" value="C:cytoplasm"/>
    <property type="evidence" value="ECO:0007005"/>
    <property type="project" value="SGD"/>
</dbReference>
<dbReference type="GO" id="GO:0005783">
    <property type="term" value="C:endoplasmic reticulum"/>
    <property type="evidence" value="ECO:0007005"/>
    <property type="project" value="SGD"/>
</dbReference>
<dbReference type="GO" id="GO:0005789">
    <property type="term" value="C:endoplasmic reticulum membrane"/>
    <property type="evidence" value="ECO:0000318"/>
    <property type="project" value="GO_Central"/>
</dbReference>
<dbReference type="GO" id="GO:0005811">
    <property type="term" value="C:lipid droplet"/>
    <property type="evidence" value="ECO:0000314"/>
    <property type="project" value="SGD"/>
</dbReference>
<dbReference type="GO" id="GO:0005741">
    <property type="term" value="C:mitochondrial outer membrane"/>
    <property type="evidence" value="ECO:0007005"/>
    <property type="project" value="SGD"/>
</dbReference>
<dbReference type="GO" id="GO:0047560">
    <property type="term" value="F:3-dehydrosphinganine reductase activity"/>
    <property type="evidence" value="ECO:0000314"/>
    <property type="project" value="UniProtKB"/>
</dbReference>
<dbReference type="GO" id="GO:0070402">
    <property type="term" value="F:NADPH binding"/>
    <property type="evidence" value="ECO:0000250"/>
    <property type="project" value="UniProtKB"/>
</dbReference>
<dbReference type="GO" id="GO:0006666">
    <property type="term" value="P:3-keto-sphinganine metabolic process"/>
    <property type="evidence" value="ECO:0000314"/>
    <property type="project" value="UniProtKB"/>
</dbReference>
<dbReference type="GO" id="GO:0030148">
    <property type="term" value="P:sphingolipid biosynthetic process"/>
    <property type="evidence" value="ECO:0000314"/>
    <property type="project" value="UniProtKB"/>
</dbReference>
<dbReference type="CDD" id="cd08939">
    <property type="entry name" value="KDSR-like_SDR_c"/>
    <property type="match status" value="1"/>
</dbReference>
<dbReference type="FunFam" id="3.40.50.720:FF:000578">
    <property type="entry name" value="3-ketodihydrosphingosine reductase"/>
    <property type="match status" value="1"/>
</dbReference>
<dbReference type="Gene3D" id="3.40.50.720">
    <property type="entry name" value="NAD(P)-binding Rossmann-like Domain"/>
    <property type="match status" value="1"/>
</dbReference>
<dbReference type="InterPro" id="IPR045022">
    <property type="entry name" value="KDSR-like"/>
</dbReference>
<dbReference type="InterPro" id="IPR036291">
    <property type="entry name" value="NAD(P)-bd_dom_sf"/>
</dbReference>
<dbReference type="InterPro" id="IPR002347">
    <property type="entry name" value="SDR_fam"/>
</dbReference>
<dbReference type="PANTHER" id="PTHR43550">
    <property type="entry name" value="3-KETODIHYDROSPHINGOSINE REDUCTASE"/>
    <property type="match status" value="1"/>
</dbReference>
<dbReference type="PANTHER" id="PTHR43550:SF3">
    <property type="entry name" value="3-KETODIHYDROSPHINGOSINE REDUCTASE"/>
    <property type="match status" value="1"/>
</dbReference>
<dbReference type="Pfam" id="PF00106">
    <property type="entry name" value="adh_short"/>
    <property type="match status" value="1"/>
</dbReference>
<dbReference type="PRINTS" id="PR00081">
    <property type="entry name" value="GDHRDH"/>
</dbReference>
<dbReference type="SUPFAM" id="SSF51735">
    <property type="entry name" value="NAD(P)-binding Rossmann-fold domains"/>
    <property type="match status" value="1"/>
</dbReference>
<proteinExistence type="evidence at protein level"/>
<accession>P38342</accession>
<accession>D6VQR2</accession>